<proteinExistence type="evidence at protein level"/>
<gene>
    <name type="primary">Crtc3</name>
    <name type="synonym">Torc3</name>
</gene>
<name>CRTC3_MOUSE</name>
<accession>Q91X84</accession>
<dbReference type="EMBL" id="AK144840">
    <property type="status" value="NOT_ANNOTATED_CDS"/>
    <property type="molecule type" value="mRNA"/>
</dbReference>
<dbReference type="EMBL" id="BC011210">
    <property type="protein sequence ID" value="AAH11210.1"/>
    <property type="molecule type" value="mRNA"/>
</dbReference>
<dbReference type="CCDS" id="CCDS21398.2">
    <molecule id="Q91X84-1"/>
</dbReference>
<dbReference type="RefSeq" id="NP_776288.2">
    <molecule id="Q91X84-1"/>
    <property type="nucleotide sequence ID" value="NM_173863.3"/>
</dbReference>
<dbReference type="RefSeq" id="XP_006541259.1">
    <property type="nucleotide sequence ID" value="XM_006541196.1"/>
</dbReference>
<dbReference type="RefSeq" id="XP_030098841.1">
    <molecule id="Q91X84-2"/>
    <property type="nucleotide sequence ID" value="XM_030242981.2"/>
</dbReference>
<dbReference type="SMR" id="Q91X84"/>
<dbReference type="BioGRID" id="214069">
    <property type="interactions" value="1"/>
</dbReference>
<dbReference type="FunCoup" id="Q91X84">
    <property type="interactions" value="3955"/>
</dbReference>
<dbReference type="STRING" id="10090.ENSMUSP00000113540"/>
<dbReference type="GlyGen" id="Q91X84">
    <property type="glycosylation" value="1 site"/>
</dbReference>
<dbReference type="iPTMnet" id="Q91X84"/>
<dbReference type="PhosphoSitePlus" id="Q91X84"/>
<dbReference type="jPOST" id="Q91X84"/>
<dbReference type="PaxDb" id="10090-ENSMUSP00000113540"/>
<dbReference type="PeptideAtlas" id="Q91X84"/>
<dbReference type="ProteomicsDB" id="285366">
    <molecule id="Q91X84-1"/>
</dbReference>
<dbReference type="ProteomicsDB" id="285367">
    <molecule id="Q91X84-2"/>
</dbReference>
<dbReference type="Pumba" id="Q91X84"/>
<dbReference type="Antibodypedia" id="37539">
    <property type="antibodies" value="150 antibodies from 28 providers"/>
</dbReference>
<dbReference type="Ensembl" id="ENSMUST00000122255.8">
    <molecule id="Q91X84-1"/>
    <property type="protein sequence ID" value="ENSMUSP00000113540.2"/>
    <property type="gene ID" value="ENSMUSG00000030527.16"/>
</dbReference>
<dbReference type="GeneID" id="70461"/>
<dbReference type="KEGG" id="mmu:70461"/>
<dbReference type="UCSC" id="uc009iaz.1">
    <molecule id="Q91X84-1"/>
    <property type="organism name" value="mouse"/>
</dbReference>
<dbReference type="AGR" id="MGI:1917711"/>
<dbReference type="CTD" id="64784"/>
<dbReference type="MGI" id="MGI:1917711">
    <property type="gene designation" value="Crtc3"/>
</dbReference>
<dbReference type="VEuPathDB" id="HostDB:ENSMUSG00000030527"/>
<dbReference type="eggNOG" id="ENOG502QV9G">
    <property type="taxonomic scope" value="Eukaryota"/>
</dbReference>
<dbReference type="GeneTree" id="ENSGT00390000010652"/>
<dbReference type="HOGENOM" id="CLU_019357_3_0_1"/>
<dbReference type="InParanoid" id="Q91X84"/>
<dbReference type="OMA" id="LPHNGQN"/>
<dbReference type="OrthoDB" id="8947034at2759"/>
<dbReference type="PhylomeDB" id="Q91X84"/>
<dbReference type="TreeFam" id="TF321571"/>
<dbReference type="BioGRID-ORCS" id="70461">
    <property type="hits" value="2 hits in 80 CRISPR screens"/>
</dbReference>
<dbReference type="ChiTaRS" id="Crtc3">
    <property type="organism name" value="mouse"/>
</dbReference>
<dbReference type="PRO" id="PR:Q91X84"/>
<dbReference type="Proteomes" id="UP000000589">
    <property type="component" value="Chromosome 7"/>
</dbReference>
<dbReference type="RNAct" id="Q91X84">
    <property type="molecule type" value="protein"/>
</dbReference>
<dbReference type="Bgee" id="ENSMUSG00000030527">
    <property type="expression patterns" value="Expressed in animal zygote and 219 other cell types or tissues"/>
</dbReference>
<dbReference type="ExpressionAtlas" id="Q91X84">
    <property type="expression patterns" value="baseline and differential"/>
</dbReference>
<dbReference type="GO" id="GO:0005737">
    <property type="term" value="C:cytoplasm"/>
    <property type="evidence" value="ECO:0000314"/>
    <property type="project" value="UniProtKB"/>
</dbReference>
<dbReference type="GO" id="GO:0005829">
    <property type="term" value="C:cytosol"/>
    <property type="evidence" value="ECO:0007669"/>
    <property type="project" value="Ensembl"/>
</dbReference>
<dbReference type="GO" id="GO:0005654">
    <property type="term" value="C:nucleoplasm"/>
    <property type="evidence" value="ECO:0007669"/>
    <property type="project" value="Ensembl"/>
</dbReference>
<dbReference type="GO" id="GO:0005634">
    <property type="term" value="C:nucleus"/>
    <property type="evidence" value="ECO:0000314"/>
    <property type="project" value="UniProtKB"/>
</dbReference>
<dbReference type="GO" id="GO:0008140">
    <property type="term" value="F:cAMP response element binding protein binding"/>
    <property type="evidence" value="ECO:0007669"/>
    <property type="project" value="InterPro"/>
</dbReference>
<dbReference type="GO" id="GO:0097009">
    <property type="term" value="P:energy homeostasis"/>
    <property type="evidence" value="ECO:0000315"/>
    <property type="project" value="MGI"/>
</dbReference>
<dbReference type="GO" id="GO:0016042">
    <property type="term" value="P:lipid catabolic process"/>
    <property type="evidence" value="ECO:0000315"/>
    <property type="project" value="MGI"/>
</dbReference>
<dbReference type="GO" id="GO:0042116">
    <property type="term" value="P:macrophage activation"/>
    <property type="evidence" value="ECO:0007669"/>
    <property type="project" value="Ensembl"/>
</dbReference>
<dbReference type="GO" id="GO:0071878">
    <property type="term" value="P:negative regulation of adenylate cyclase-activating adrenergic receptor signaling pathway"/>
    <property type="evidence" value="ECO:0000314"/>
    <property type="project" value="MGI"/>
</dbReference>
<dbReference type="GO" id="GO:0050995">
    <property type="term" value="P:negative regulation of lipid catabolic process"/>
    <property type="evidence" value="ECO:0000315"/>
    <property type="project" value="MGI"/>
</dbReference>
<dbReference type="GO" id="GO:0032793">
    <property type="term" value="P:positive regulation of CREB transcription factor activity"/>
    <property type="evidence" value="ECO:0000315"/>
    <property type="project" value="UniProtKB"/>
</dbReference>
<dbReference type="GO" id="GO:0045944">
    <property type="term" value="P:positive regulation of transcription by RNA polymerase II"/>
    <property type="evidence" value="ECO:0000314"/>
    <property type="project" value="MGI"/>
</dbReference>
<dbReference type="GO" id="GO:0051289">
    <property type="term" value="P:protein homotetramerization"/>
    <property type="evidence" value="ECO:0007669"/>
    <property type="project" value="InterPro"/>
</dbReference>
<dbReference type="InterPro" id="IPR024786">
    <property type="entry name" value="TORC"/>
</dbReference>
<dbReference type="InterPro" id="IPR024785">
    <property type="entry name" value="TORC_C"/>
</dbReference>
<dbReference type="InterPro" id="IPR024784">
    <property type="entry name" value="TORC_M"/>
</dbReference>
<dbReference type="InterPro" id="IPR024783">
    <property type="entry name" value="TORC_N"/>
</dbReference>
<dbReference type="PANTHER" id="PTHR13589">
    <property type="entry name" value="CREB-REGULATED TRANSCRIPTION COACTIVATOR"/>
    <property type="match status" value="1"/>
</dbReference>
<dbReference type="PANTHER" id="PTHR13589:SF4">
    <property type="entry name" value="CREB-REGULATED TRANSCRIPTION COACTIVATOR 3"/>
    <property type="match status" value="1"/>
</dbReference>
<dbReference type="Pfam" id="PF12886">
    <property type="entry name" value="TORC_C"/>
    <property type="match status" value="1"/>
</dbReference>
<dbReference type="Pfam" id="PF12885">
    <property type="entry name" value="TORC_M"/>
    <property type="match status" value="1"/>
</dbReference>
<dbReference type="Pfam" id="PF12884">
    <property type="entry name" value="TORC_N"/>
    <property type="match status" value="1"/>
</dbReference>
<feature type="chain" id="PRO_0000318532" description="CREB-regulated transcription coactivator 3">
    <location>
        <begin position="1"/>
        <end position="619"/>
    </location>
</feature>
<feature type="region of interest" description="Disordered" evidence="2">
    <location>
        <begin position="129"/>
        <end position="148"/>
    </location>
</feature>
<feature type="region of interest" description="Disordered" evidence="2">
    <location>
        <begin position="375"/>
        <end position="478"/>
    </location>
</feature>
<feature type="region of interest" description="Required for interaction with PPP2CA and PPP2R1A" evidence="5">
    <location>
        <begin position="380"/>
        <end position="401"/>
    </location>
</feature>
<feature type="compositionally biased region" description="Polar residues" evidence="2">
    <location>
        <begin position="405"/>
        <end position="415"/>
    </location>
</feature>
<feature type="compositionally biased region" description="Polar residues" evidence="2">
    <location>
        <begin position="422"/>
        <end position="431"/>
    </location>
</feature>
<feature type="compositionally biased region" description="Pro residues" evidence="2">
    <location>
        <begin position="443"/>
        <end position="454"/>
    </location>
</feature>
<feature type="compositionally biased region" description="Low complexity" evidence="2">
    <location>
        <begin position="455"/>
        <end position="478"/>
    </location>
</feature>
<feature type="modified residue" description="Phosphoserine" evidence="1">
    <location>
        <position position="4"/>
    </location>
</feature>
<feature type="modified residue" description="Phosphoserine" evidence="3 8">
    <location>
        <position position="62"/>
    </location>
</feature>
<feature type="modified residue" description="Phosphothreonine" evidence="3">
    <location>
        <position position="160"/>
    </location>
</feature>
<feature type="modified residue" description="Phosphoserine; by SIK2" evidence="3 5">
    <location>
        <position position="162"/>
    </location>
</feature>
<feature type="modified residue" description="Phosphoserine" evidence="3 4 5">
    <location>
        <position position="273"/>
    </location>
</feature>
<feature type="modified residue" description="Phosphoserine" evidence="1">
    <location>
        <position position="329"/>
    </location>
</feature>
<feature type="modified residue" description="Phosphoserine" evidence="1">
    <location>
        <position position="332"/>
    </location>
</feature>
<feature type="modified residue" description="Phosphoserine" evidence="8">
    <location>
        <position position="370"/>
    </location>
</feature>
<feature type="modified residue" description="Phosphoserine" evidence="5">
    <location>
        <position position="391"/>
    </location>
</feature>
<feature type="modified residue" description="Phosphoserine" evidence="5">
    <location>
        <position position="396"/>
    </location>
</feature>
<feature type="modified residue" description="Phosphoserine" evidence="1">
    <location>
        <position position="410"/>
    </location>
</feature>
<feature type="modified residue" description="Phosphoserine" evidence="1">
    <location>
        <position position="443"/>
    </location>
</feature>
<feature type="cross-link" description="Glycyl lysine isopeptide (Lys-Gly) (interchain with G-Cter in SUMO2)" evidence="1">
    <location>
        <position position="232"/>
    </location>
</feature>
<feature type="splice variant" id="VSP_031221" description="In isoform 2." evidence="6">
    <location>
        <begin position="1"/>
        <end position="299"/>
    </location>
</feature>
<feature type="mutagenesis site" description="Reduces interaction with 14-3-3 proteins without affecting the interaction with PPP2R1A; when associated with A-329 and A-370." evidence="5">
    <original>S</original>
    <variation>A</variation>
    <location>
        <position position="62"/>
    </location>
</feature>
<feature type="mutagenesis site" description="Up-regulates CREB transcription factor activity. Reduces interaction with 14-3-3 proteins. Abolishes interaction with 14-3-3 proteins without affecting the interaction with PPP2R1A; when associated with A-273." evidence="3 5">
    <original>S</original>
    <variation>A</variation>
    <location>
        <position position="162"/>
    </location>
</feature>
<feature type="mutagenesis site" description="Reduces interaction with 14-3-3 proteins. Abolishes interaction with 14-3-3 proteins without affecting the interaction with PPP2R1A; when associated with A-162." evidence="3 5">
    <original>S</original>
    <variation>A</variation>
    <location>
        <position position="273"/>
    </location>
</feature>
<feature type="mutagenesis site" description="Reduces interaction with 14-3-3 proteins without affecting the interaction with PPP2R1A; when associated with A-62 and A-370." evidence="5">
    <original>S</original>
    <variation>A</variation>
    <location>
        <position position="329"/>
    </location>
</feature>
<feature type="mutagenesis site" description="Reduces interaction with 14-3-3 proteins without affecting the interaction with PPP2R1A; when associated with A-62 and A-329." evidence="5">
    <original>S</original>
    <variation>A</variation>
    <location>
        <position position="370"/>
    </location>
</feature>
<feature type="mutagenesis site" description="Abolishes phosphorylation. Abolishes interaction with PPP2CA and PPP2R1A. Slight increase in phosphorylation at Ser-273 and in the interaction with 14-3-3 proteins." evidence="5">
    <original>S</original>
    <variation>A</variation>
    <variation>E</variation>
    <location>
        <position position="391"/>
    </location>
</feature>
<feature type="mutagenesis site" description="Abolishes phosphorylation at Ser-391. Abolishes interaction with PPP2CA and PPP2R1A." evidence="5">
    <original>P</original>
    <variation>A</variation>
    <location>
        <position position="392"/>
    </location>
</feature>
<feature type="mutagenesis site" description="Does not affect phosphorylation at Ser-391 or the interaction with PPP2CA and PPP2R1A." evidence="5">
    <original>T</original>
    <variation>A</variation>
    <location>
        <position position="394"/>
    </location>
</feature>
<feature type="mutagenesis site" description="Does not affect phosphorylation at Ser-391 or the interaction with PPP2CA and PPP2R1A." evidence="5">
    <original>S</original>
    <variation>A</variation>
    <location>
        <position position="396"/>
    </location>
</feature>
<keyword id="KW-0010">Activator</keyword>
<keyword id="KW-0025">Alternative splicing</keyword>
<keyword id="KW-0963">Cytoplasm</keyword>
<keyword id="KW-1017">Isopeptide bond</keyword>
<keyword id="KW-0539">Nucleus</keyword>
<keyword id="KW-0597">Phosphoprotein</keyword>
<keyword id="KW-1185">Reference proteome</keyword>
<keyword id="KW-0804">Transcription</keyword>
<keyword id="KW-0805">Transcription regulation</keyword>
<keyword id="KW-0832">Ubl conjugation</keyword>
<organism>
    <name type="scientific">Mus musculus</name>
    <name type="common">Mouse</name>
    <dbReference type="NCBI Taxonomy" id="10090"/>
    <lineage>
        <taxon>Eukaryota</taxon>
        <taxon>Metazoa</taxon>
        <taxon>Chordata</taxon>
        <taxon>Craniata</taxon>
        <taxon>Vertebrata</taxon>
        <taxon>Euteleostomi</taxon>
        <taxon>Mammalia</taxon>
        <taxon>Eutheria</taxon>
        <taxon>Euarchontoglires</taxon>
        <taxon>Glires</taxon>
        <taxon>Rodentia</taxon>
        <taxon>Myomorpha</taxon>
        <taxon>Muroidea</taxon>
        <taxon>Muridae</taxon>
        <taxon>Murinae</taxon>
        <taxon>Mus</taxon>
        <taxon>Mus</taxon>
    </lineage>
</organism>
<evidence type="ECO:0000250" key="1">
    <source>
        <dbReference type="UniProtKB" id="Q6UUV7"/>
    </source>
</evidence>
<evidence type="ECO:0000256" key="2">
    <source>
        <dbReference type="SAM" id="MobiDB-lite"/>
    </source>
</evidence>
<evidence type="ECO:0000269" key="3">
    <source>
    </source>
</evidence>
<evidence type="ECO:0000269" key="4">
    <source>
    </source>
</evidence>
<evidence type="ECO:0000269" key="5">
    <source>
    </source>
</evidence>
<evidence type="ECO:0000303" key="6">
    <source>
    </source>
</evidence>
<evidence type="ECO:0000305" key="7"/>
<evidence type="ECO:0007744" key="8">
    <source>
    </source>
</evidence>
<reference key="1">
    <citation type="journal article" date="2005" name="Science">
        <title>The transcriptional landscape of the mammalian genome.</title>
        <authorList>
            <person name="Carninci P."/>
            <person name="Kasukawa T."/>
            <person name="Katayama S."/>
            <person name="Gough J."/>
            <person name="Frith M.C."/>
            <person name="Maeda N."/>
            <person name="Oyama R."/>
            <person name="Ravasi T."/>
            <person name="Lenhard B."/>
            <person name="Wells C."/>
            <person name="Kodzius R."/>
            <person name="Shimokawa K."/>
            <person name="Bajic V.B."/>
            <person name="Brenner S.E."/>
            <person name="Batalov S."/>
            <person name="Forrest A.R."/>
            <person name="Zavolan M."/>
            <person name="Davis M.J."/>
            <person name="Wilming L.G."/>
            <person name="Aidinis V."/>
            <person name="Allen J.E."/>
            <person name="Ambesi-Impiombato A."/>
            <person name="Apweiler R."/>
            <person name="Aturaliya R.N."/>
            <person name="Bailey T.L."/>
            <person name="Bansal M."/>
            <person name="Baxter L."/>
            <person name="Beisel K.W."/>
            <person name="Bersano T."/>
            <person name="Bono H."/>
            <person name="Chalk A.M."/>
            <person name="Chiu K.P."/>
            <person name="Choudhary V."/>
            <person name="Christoffels A."/>
            <person name="Clutterbuck D.R."/>
            <person name="Crowe M.L."/>
            <person name="Dalla E."/>
            <person name="Dalrymple B.P."/>
            <person name="de Bono B."/>
            <person name="Della Gatta G."/>
            <person name="di Bernardo D."/>
            <person name="Down T."/>
            <person name="Engstrom P."/>
            <person name="Fagiolini M."/>
            <person name="Faulkner G."/>
            <person name="Fletcher C.F."/>
            <person name="Fukushima T."/>
            <person name="Furuno M."/>
            <person name="Futaki S."/>
            <person name="Gariboldi M."/>
            <person name="Georgii-Hemming P."/>
            <person name="Gingeras T.R."/>
            <person name="Gojobori T."/>
            <person name="Green R.E."/>
            <person name="Gustincich S."/>
            <person name="Harbers M."/>
            <person name="Hayashi Y."/>
            <person name="Hensch T.K."/>
            <person name="Hirokawa N."/>
            <person name="Hill D."/>
            <person name="Huminiecki L."/>
            <person name="Iacono M."/>
            <person name="Ikeo K."/>
            <person name="Iwama A."/>
            <person name="Ishikawa T."/>
            <person name="Jakt M."/>
            <person name="Kanapin A."/>
            <person name="Katoh M."/>
            <person name="Kawasawa Y."/>
            <person name="Kelso J."/>
            <person name="Kitamura H."/>
            <person name="Kitano H."/>
            <person name="Kollias G."/>
            <person name="Krishnan S.P."/>
            <person name="Kruger A."/>
            <person name="Kummerfeld S.K."/>
            <person name="Kurochkin I.V."/>
            <person name="Lareau L.F."/>
            <person name="Lazarevic D."/>
            <person name="Lipovich L."/>
            <person name="Liu J."/>
            <person name="Liuni S."/>
            <person name="McWilliam S."/>
            <person name="Madan Babu M."/>
            <person name="Madera M."/>
            <person name="Marchionni L."/>
            <person name="Matsuda H."/>
            <person name="Matsuzawa S."/>
            <person name="Miki H."/>
            <person name="Mignone F."/>
            <person name="Miyake S."/>
            <person name="Morris K."/>
            <person name="Mottagui-Tabar S."/>
            <person name="Mulder N."/>
            <person name="Nakano N."/>
            <person name="Nakauchi H."/>
            <person name="Ng P."/>
            <person name="Nilsson R."/>
            <person name="Nishiguchi S."/>
            <person name="Nishikawa S."/>
            <person name="Nori F."/>
            <person name="Ohara O."/>
            <person name="Okazaki Y."/>
            <person name="Orlando V."/>
            <person name="Pang K.C."/>
            <person name="Pavan W.J."/>
            <person name="Pavesi G."/>
            <person name="Pesole G."/>
            <person name="Petrovsky N."/>
            <person name="Piazza S."/>
            <person name="Reed J."/>
            <person name="Reid J.F."/>
            <person name="Ring B.Z."/>
            <person name="Ringwald M."/>
            <person name="Rost B."/>
            <person name="Ruan Y."/>
            <person name="Salzberg S.L."/>
            <person name="Sandelin A."/>
            <person name="Schneider C."/>
            <person name="Schoenbach C."/>
            <person name="Sekiguchi K."/>
            <person name="Semple C.A."/>
            <person name="Seno S."/>
            <person name="Sessa L."/>
            <person name="Sheng Y."/>
            <person name="Shibata Y."/>
            <person name="Shimada H."/>
            <person name="Shimada K."/>
            <person name="Silva D."/>
            <person name="Sinclair B."/>
            <person name="Sperling S."/>
            <person name="Stupka E."/>
            <person name="Sugiura K."/>
            <person name="Sultana R."/>
            <person name="Takenaka Y."/>
            <person name="Taki K."/>
            <person name="Tammoja K."/>
            <person name="Tan S.L."/>
            <person name="Tang S."/>
            <person name="Taylor M.S."/>
            <person name="Tegner J."/>
            <person name="Teichmann S.A."/>
            <person name="Ueda H.R."/>
            <person name="van Nimwegen E."/>
            <person name="Verardo R."/>
            <person name="Wei C.L."/>
            <person name="Yagi K."/>
            <person name="Yamanishi H."/>
            <person name="Zabarovsky E."/>
            <person name="Zhu S."/>
            <person name="Zimmer A."/>
            <person name="Hide W."/>
            <person name="Bult C."/>
            <person name="Grimmond S.M."/>
            <person name="Teasdale R.D."/>
            <person name="Liu E.T."/>
            <person name="Brusic V."/>
            <person name="Quackenbush J."/>
            <person name="Wahlestedt C."/>
            <person name="Mattick J.S."/>
            <person name="Hume D.A."/>
            <person name="Kai C."/>
            <person name="Sasaki D."/>
            <person name="Tomaru Y."/>
            <person name="Fukuda S."/>
            <person name="Kanamori-Katayama M."/>
            <person name="Suzuki M."/>
            <person name="Aoki J."/>
            <person name="Arakawa T."/>
            <person name="Iida J."/>
            <person name="Imamura K."/>
            <person name="Itoh M."/>
            <person name="Kato T."/>
            <person name="Kawaji H."/>
            <person name="Kawagashira N."/>
            <person name="Kawashima T."/>
            <person name="Kojima M."/>
            <person name="Kondo S."/>
            <person name="Konno H."/>
            <person name="Nakano K."/>
            <person name="Ninomiya N."/>
            <person name="Nishio T."/>
            <person name="Okada M."/>
            <person name="Plessy C."/>
            <person name="Shibata K."/>
            <person name="Shiraki T."/>
            <person name="Suzuki S."/>
            <person name="Tagami M."/>
            <person name="Waki K."/>
            <person name="Watahiki A."/>
            <person name="Okamura-Oho Y."/>
            <person name="Suzuki H."/>
            <person name="Kawai J."/>
            <person name="Hayashizaki Y."/>
        </authorList>
    </citation>
    <scope>NUCLEOTIDE SEQUENCE [LARGE SCALE MRNA] (ISOFORM 1)</scope>
    <source>
        <tissue>Lung</tissue>
    </source>
</reference>
<reference key="2">
    <citation type="journal article" date="2004" name="Genome Res.">
        <title>The status, quality, and expansion of the NIH full-length cDNA project: the Mammalian Gene Collection (MGC).</title>
        <authorList>
            <consortium name="The MGC Project Team"/>
        </authorList>
    </citation>
    <scope>NUCLEOTIDE SEQUENCE [LARGE SCALE MRNA] (ISOFORM 2)</scope>
    <source>
        <strain>FVB/N</strain>
        <tissue>Liver</tissue>
    </source>
</reference>
<reference key="3">
    <citation type="journal article" date="2010" name="Cell">
        <title>A tissue-specific atlas of mouse protein phosphorylation and expression.</title>
        <authorList>
            <person name="Huttlin E.L."/>
            <person name="Jedrychowski M.P."/>
            <person name="Elias J.E."/>
            <person name="Goswami T."/>
            <person name="Rad R."/>
            <person name="Beausoleil S.A."/>
            <person name="Villen J."/>
            <person name="Haas W."/>
            <person name="Sowa M.E."/>
            <person name="Gygi S.P."/>
        </authorList>
    </citation>
    <scope>PHOSPHORYLATION [LARGE SCALE ANALYSIS] AT SER-62 AND SER-370</scope>
    <scope>IDENTIFICATION BY MASS SPECTROMETRY [LARGE SCALE ANALYSIS]</scope>
    <source>
        <tissue>Brown adipose tissue</tissue>
        <tissue>Heart</tissue>
        <tissue>Kidney</tissue>
        <tissue>Lung</tissue>
        <tissue>Spleen</tissue>
        <tissue>Testis</tissue>
    </source>
</reference>
<reference key="4">
    <citation type="journal article" date="2018" name="FEBS J.">
        <title>14-3-3 proteins mediate inhibitory effects of cAMP on salt-inducible kinases (SIKs).</title>
        <authorList>
            <person name="Sonntag T."/>
            <person name="Vaughan J.M."/>
            <person name="Montminy M."/>
        </authorList>
    </citation>
    <scope>FUNCTION</scope>
    <scope>PHOSPHORYLATION AT SER-273</scope>
</reference>
<reference key="5">
    <citation type="journal article" date="2017" name="PLoS ONE">
        <title>Analysis of a cAMP regulated coactivator family reveals an alternative phosphorylation motif for AMPK family members.</title>
        <authorList>
            <person name="Sonntag T."/>
            <person name="Moresco J.J."/>
            <person name="Vaughan J.M."/>
            <person name="Matsumura S."/>
            <person name="Yates J.R. III"/>
            <person name="Montminy M."/>
        </authorList>
    </citation>
    <scope>IDENTIFICATION BY MASS SPECTROMETRY</scope>
    <scope>PHOSPHORYLATION AT SER-62; THR-160; SER-162 AND SER-273</scope>
    <scope>MUTAGENESIS OF SER-162 AND SER-273</scope>
    <scope>INTERACTION WITH 14-3-3 PROTEINS</scope>
</reference>
<reference key="6">
    <citation type="journal article" date="2018" name="IScience">
        <title>Mitogenic Signals Stimulate the CREB Coactivator CRTC3 through PP2A Recruitment.</title>
        <authorList>
            <person name="Sonntag T."/>
            <person name="Ostojic J."/>
            <person name="Vaughan J.M."/>
            <person name="Moresco J.J."/>
            <person name="Yoon Y.S."/>
            <person name="Yates J.R. III"/>
            <person name="Montminy M."/>
        </authorList>
    </citation>
    <scope>FUNCTION</scope>
    <scope>INTERACTION WITH YWHAE; PPP2CA; PPP2R1A AND PPP2R2A</scope>
    <scope>SUBCELLULAR LOCATION</scope>
    <scope>TISSUE SPECIFICITY</scope>
    <scope>PHOSPHORYLATION AT SER-162; SER-273; SER-391 AND SER-396</scope>
    <scope>MUTAGENESIS OF SER-62; SER-162; SER-273; SER-329; SER-370; SER-391; PRO-392; THR-394 AND SER-396</scope>
</reference>
<comment type="function">
    <text evidence="1 4 5">Transcriptional coactivator for CREB1 which activates transcription through both consensus and variant cAMP response element (CRE) sites (PubMed:29211348, PubMed:30611118). Acts as a coactivator, in the SIK/TORC signaling pathway, being active when dephosphorylated (PubMed:29211348). Acts independently of CREB1 'Ser-133' phosphorylation (By similarity). Enhances the interaction of CREB1 with TAF4 (By similarity). Regulates the expression of specific CREB-activated genes such as the steroidogenic gene, StAR (By similarity). Potent coactivator of PPARGC1A and inducer of mitochondrial biogenesis in muscle cells (By similarity).</text>
</comment>
<comment type="subunit">
    <text evidence="1 3 5">Binding, as a tetramer, through its N-terminal region, with the bZIP domain of CREB1 enhances recruitment of TAF4 to the promoter (By similarity). 'Arg-314' in the bZIP domain of CREB1 is essential for this interaction (By similarity). Interacts (when phosphorylated at Ser-162 and Se-273) with 14-3-3 proteins (PubMed:28235073, PubMed:30611118). Interacts with YWHAE (PubMed:30611118). Interacts (when phosphorylated at Ser-391) with phosphatase PP2A catalytic subunit PPP2CA and regulatory subunits PPP2R1A and PPP2R2A (PubMed:30611118).</text>
</comment>
<comment type="subcellular location">
    <subcellularLocation>
        <location evidence="5">Nucleus</location>
    </subcellularLocation>
    <subcellularLocation>
        <location evidence="5">Cytoplasm</location>
    </subcellularLocation>
    <text evidence="1 5">Appears to be mainly nuclear. Translocates to the nucleus following adenylyl cyclase or MAP kinase activation (PubMed:30611118).</text>
</comment>
<comment type="alternative products">
    <event type="alternative splicing"/>
    <isoform>
        <id>Q91X84-1</id>
        <name>1</name>
        <sequence type="displayed"/>
    </isoform>
    <isoform>
        <id>Q91X84-2</id>
        <name>2</name>
        <sequence type="described" ref="VSP_031221"/>
    </isoform>
</comment>
<comment type="tissue specificity">
    <text evidence="5">Expressed in brown adipose tissues.</text>
</comment>
<comment type="PTM">
    <text evidence="4 5">Phosphorylation/dephosphorylation states of Ser-273 are required for regulating transduction of CREB activity (PubMed:29211348). CRTCs/TORCs are inactive when phosphorylated, and active when dephosphorylated at this site (PubMed:29211348). May be phosphorylated at Ser-391 by MAPK3/ERK1 and/or MAPK1/ERK2 or by some cyclin-dependent kinases such as CDK1,CDK2 or CDK5 (PubMed:30611118). Following adenylyl cyclase activation, dephosphorylated at Ser-162 and Ser-273 resulting in its dissociation from 14-3-3 proteins probably promoting CRTC3 translocation into the nucleus (PubMed:30611118).</text>
</comment>
<comment type="similarity">
    <text evidence="7">Belongs to the TORC family.</text>
</comment>
<protein>
    <recommendedName>
        <fullName>CREB-regulated transcription coactivator 3</fullName>
    </recommendedName>
    <alternativeName>
        <fullName>Transducer of regulated cAMP response element-binding protein 3</fullName>
        <shortName>TORC-3</shortName>
        <shortName>Transducer of CREB protein 3</shortName>
    </alternativeName>
</protein>
<sequence length="619" mass="67027">MAASPGSGSANPRKFSEKIALHTQRQAEETRAFEQLMTDLTLSRVQFQKLQQLRLTQYHGGSLPNVSQLRNSAPEFQPSLHQADNVRGTRHHGLVERPARNRFHPLHRRSGDKPGRQFDGNAFAASYSSQHLDESWPRQQPPWKEEKHPGFRLTSALNRTNSDSALHTSALSTKPQDPYGGGGQSAWPAPYMGFCDGENDGHAEVAAFPGPLKEENLLNVPKPLPKHLWESKEIQSLSGRPRSCDVGGGNAFPHNGQNTGLSPFLGTLNTGGSLPDLTNLHYSAPLPASLDTSDHLFGSMSVGNSVGNLPAAMTHLGIRTSSGLQSSRSNPSIQATLSKMALSSSLKCHPQPSVANASALHPSLRLFSLSNPSLSTTNLSGPSRRRQPPVSPLTLSPGPEAHQGFSRQLSATSPLNPYPASQMVTSEQSPLSFLPTDAQAQVSPPPPYPTPQELPQPLLQQPHAQEPPTQQPQAAPSLPQSDFQLLTAQGSALTSFFPDVRFDQQPMRPSPAFPQQVPLVQQSHREPQDSFHLRPNPYSSCGSFPGTILTEDTNSNLFKGLSGGLSGMPEVSLDMDTPFPLEEELQIEPLSLDGLNMLSDSSMGLLDPSVEETFRADRL</sequence>